<reference key="1">
    <citation type="journal article" date="2007" name="BMC Microbiol.">
        <title>Subtle genetic changes enhance virulence of methicillin resistant and sensitive Staphylococcus aureus.</title>
        <authorList>
            <person name="Highlander S.K."/>
            <person name="Hulten K.G."/>
            <person name="Qin X."/>
            <person name="Jiang H."/>
            <person name="Yerrapragada S."/>
            <person name="Mason E.O. Jr."/>
            <person name="Shang Y."/>
            <person name="Williams T.M."/>
            <person name="Fortunov R.M."/>
            <person name="Liu Y."/>
            <person name="Igboeli O."/>
            <person name="Petrosino J."/>
            <person name="Tirumalai M."/>
            <person name="Uzman A."/>
            <person name="Fox G.E."/>
            <person name="Cardenas A.M."/>
            <person name="Muzny D.M."/>
            <person name="Hemphill L."/>
            <person name="Ding Y."/>
            <person name="Dugan S."/>
            <person name="Blyth P.R."/>
            <person name="Buhay C.J."/>
            <person name="Dinh H.H."/>
            <person name="Hawes A.C."/>
            <person name="Holder M."/>
            <person name="Kovar C.L."/>
            <person name="Lee S.L."/>
            <person name="Liu W."/>
            <person name="Nazareth L.V."/>
            <person name="Wang Q."/>
            <person name="Zhou J."/>
            <person name="Kaplan S.L."/>
            <person name="Weinstock G.M."/>
        </authorList>
    </citation>
    <scope>NUCLEOTIDE SEQUENCE [LARGE SCALE GENOMIC DNA]</scope>
    <source>
        <strain>USA300 / TCH1516</strain>
    </source>
</reference>
<protein>
    <recommendedName>
        <fullName evidence="1">Iron-sulfur cluster repair protein ScdA</fullName>
    </recommendedName>
</protein>
<accession>A8Z0M2</accession>
<organism>
    <name type="scientific">Staphylococcus aureus (strain USA300 / TCH1516)</name>
    <dbReference type="NCBI Taxonomy" id="451516"/>
    <lineage>
        <taxon>Bacteria</taxon>
        <taxon>Bacillati</taxon>
        <taxon>Bacillota</taxon>
        <taxon>Bacilli</taxon>
        <taxon>Bacillales</taxon>
        <taxon>Staphylococcaceae</taxon>
        <taxon>Staphylococcus</taxon>
    </lineage>
</organism>
<keyword id="KW-0963">Cytoplasm</keyword>
<keyword id="KW-0408">Iron</keyword>
<keyword id="KW-0479">Metal-binding</keyword>
<keyword id="KW-0346">Stress response</keyword>
<sequence length="224" mass="25485">MINKNDIVADVVTDYPKAADIFRSVGIDFCCGGQVSIEAAALEKKNVDLNELLQRLNDVEQTNTPGSLNPKFLNVSSLIQYIQSAYHEPLREEFKNLTPYVTKLSKVHGPNHPYLVELKETYDTFKNGMLEHMQKEDDVDFPKLIKYEQGEVVDDINTVIDDLVSDHIATGELLVKMSELTSSYEPPIEACGTWRLVYQRLKALEVLTHEHVHLENHVLFKKVS</sequence>
<name>SCDA_STAAT</name>
<proteinExistence type="inferred from homology"/>
<evidence type="ECO:0000255" key="1">
    <source>
        <dbReference type="HAMAP-Rule" id="MF_01156"/>
    </source>
</evidence>
<dbReference type="EMBL" id="CP000730">
    <property type="protein sequence ID" value="ABX28301.1"/>
    <property type="molecule type" value="Genomic_DNA"/>
</dbReference>
<dbReference type="RefSeq" id="WP_000608826.1">
    <property type="nucleotide sequence ID" value="NC_010079.1"/>
</dbReference>
<dbReference type="SMR" id="A8Z0M2"/>
<dbReference type="KEGG" id="sax:USA300HOU_0270"/>
<dbReference type="HOGENOM" id="CLU_076075_0_1_9"/>
<dbReference type="GO" id="GO:0005737">
    <property type="term" value="C:cytoplasm"/>
    <property type="evidence" value="ECO:0007669"/>
    <property type="project" value="UniProtKB-SubCell"/>
</dbReference>
<dbReference type="GO" id="GO:0046872">
    <property type="term" value="F:metal ion binding"/>
    <property type="evidence" value="ECO:0007669"/>
    <property type="project" value="UniProtKB-KW"/>
</dbReference>
<dbReference type="GO" id="GO:0030091">
    <property type="term" value="P:protein repair"/>
    <property type="evidence" value="ECO:0007669"/>
    <property type="project" value="UniProtKB-UniRule"/>
</dbReference>
<dbReference type="GO" id="GO:0051409">
    <property type="term" value="P:response to nitrosative stress"/>
    <property type="evidence" value="ECO:0007669"/>
    <property type="project" value="UniProtKB-UniRule"/>
</dbReference>
<dbReference type="GO" id="GO:0006979">
    <property type="term" value="P:response to oxidative stress"/>
    <property type="evidence" value="ECO:0007669"/>
    <property type="project" value="UniProtKB-UniRule"/>
</dbReference>
<dbReference type="FunFam" id="1.20.120.520:FF:000003">
    <property type="entry name" value="Iron-sulfur cluster repair protein ScdA"/>
    <property type="match status" value="1"/>
</dbReference>
<dbReference type="Gene3D" id="1.20.120.520">
    <property type="entry name" value="nmb1532 protein domain like"/>
    <property type="match status" value="1"/>
</dbReference>
<dbReference type="Gene3D" id="1.10.3910.10">
    <property type="entry name" value="SP0561-like"/>
    <property type="match status" value="1"/>
</dbReference>
<dbReference type="HAMAP" id="MF_01156">
    <property type="entry name" value="RIC_ScdA"/>
    <property type="match status" value="1"/>
</dbReference>
<dbReference type="InterPro" id="IPR012312">
    <property type="entry name" value="Hemerythrin-like"/>
</dbReference>
<dbReference type="InterPro" id="IPR019903">
    <property type="entry name" value="RIC_family"/>
</dbReference>
<dbReference type="InterPro" id="IPR023551">
    <property type="entry name" value="ScdA"/>
</dbReference>
<dbReference type="InterPro" id="IPR038062">
    <property type="entry name" value="ScdA-like_N_sf"/>
</dbReference>
<dbReference type="NCBIfam" id="TIGR03652">
    <property type="entry name" value="FeS_repair_RIC"/>
    <property type="match status" value="1"/>
</dbReference>
<dbReference type="NCBIfam" id="NF009777">
    <property type="entry name" value="PRK13276.1"/>
    <property type="match status" value="1"/>
</dbReference>
<dbReference type="PANTHER" id="PTHR36438">
    <property type="entry name" value="IRON-SULFUR CLUSTER REPAIR PROTEIN YTFE"/>
    <property type="match status" value="1"/>
</dbReference>
<dbReference type="PANTHER" id="PTHR36438:SF1">
    <property type="entry name" value="IRON-SULFUR CLUSTER REPAIR PROTEIN YTFE"/>
    <property type="match status" value="1"/>
</dbReference>
<dbReference type="Pfam" id="PF01814">
    <property type="entry name" value="Hemerythrin"/>
    <property type="match status" value="1"/>
</dbReference>
<dbReference type="Pfam" id="PF04405">
    <property type="entry name" value="ScdA_N"/>
    <property type="match status" value="1"/>
</dbReference>
<dbReference type="SUPFAM" id="SSF140683">
    <property type="entry name" value="SP0561-like"/>
    <property type="match status" value="1"/>
</dbReference>
<comment type="function">
    <text evidence="1">Di-iron-containing protein involved in the repair of iron-sulfur clusters damaged by oxidative and nitrosative stress conditions.</text>
</comment>
<comment type="subunit">
    <text evidence="1">Homodimer.</text>
</comment>
<comment type="subcellular location">
    <subcellularLocation>
        <location evidence="1">Cytoplasm</location>
    </subcellularLocation>
</comment>
<comment type="similarity">
    <text evidence="1">Belongs to the RIC family. ScdA subfamily.</text>
</comment>
<feature type="chain" id="PRO_1000085351" description="Iron-sulfur cluster repair protein ScdA">
    <location>
        <begin position="1"/>
        <end position="224"/>
    </location>
</feature>
<gene>
    <name evidence="1" type="primary">scdA</name>
    <name type="ordered locus">USA300HOU_0270</name>
</gene>